<feature type="chain" id="PRO_0000172596" description="Phosphatidylglycerol--prolipoprotein diacylglyceryl transferase">
    <location>
        <begin position="1"/>
        <end position="291"/>
    </location>
</feature>
<feature type="topological domain" description="Periplasmic" evidence="3 4">
    <location>
        <begin position="1"/>
        <end position="24"/>
    </location>
</feature>
<feature type="transmembrane region" description="Helical" evidence="4 15">
    <location>
        <begin position="25"/>
        <end position="43"/>
    </location>
</feature>
<feature type="topological domain" description="Cytoplasmic" evidence="4 11">
    <location>
        <begin position="44"/>
        <end position="56"/>
    </location>
</feature>
<feature type="transmembrane region" description="Helical" evidence="4 15">
    <location>
        <begin position="57"/>
        <end position="76"/>
    </location>
</feature>
<feature type="topological domain" description="Periplasmic" evidence="4 11">
    <location>
        <begin position="77"/>
        <end position="98"/>
    </location>
</feature>
<feature type="transmembrane region" description="Helical" evidence="4 15">
    <location>
        <begin position="99"/>
        <end position="119"/>
    </location>
</feature>
<feature type="topological domain" description="Cytoplasmic" evidence="4 11">
    <location>
        <begin position="120"/>
        <end position="129"/>
    </location>
</feature>
<feature type="transmembrane region" description="Helical" evidence="4 15">
    <location>
        <begin position="130"/>
        <end position="150"/>
    </location>
</feature>
<feature type="topological domain" description="Periplasmic" evidence="4 11">
    <location>
        <begin position="151"/>
        <end position="197"/>
    </location>
</feature>
<feature type="transmembrane region" description="Helical" evidence="4 15">
    <location>
        <begin position="198"/>
        <end position="218"/>
    </location>
</feature>
<feature type="topological domain" description="Cytoplasmic" evidence="4 11">
    <location>
        <begin position="219"/>
        <end position="225"/>
    </location>
</feature>
<feature type="transmembrane region" description="Helical" evidence="4 15">
    <location>
        <begin position="226"/>
        <end position="244"/>
    </location>
</feature>
<feature type="topological domain" description="Periplasmic" evidence="4 11">
    <location>
        <begin position="245"/>
        <end position="261"/>
    </location>
</feature>
<feature type="transmembrane region" description="Helical" evidence="4 15">
    <location>
        <begin position="262"/>
        <end position="282"/>
    </location>
</feature>
<feature type="topological domain" description="Cytoplasmic" evidence="4 10 11">
    <location>
        <begin position="283"/>
        <end position="291"/>
    </location>
</feature>
<feature type="binding site" evidence="1 4">
    <location>
        <position position="143"/>
    </location>
    <ligand>
        <name>a 1,2-diacyl-sn-glycero-3-phospho-(1'-sn-glycerol)</name>
        <dbReference type="ChEBI" id="CHEBI:64716"/>
    </ligand>
</feature>
<feature type="sequence variant" description="In SK636, temperature-sensitive." evidence="12">
    <original>W</original>
    <variation>R</variation>
    <location>
        <position position="25"/>
    </location>
</feature>
<feature type="sequence variant" description="In SK634, temperature-sensitive." evidence="12">
    <original>G</original>
    <variation>S</variation>
    <location>
        <position position="104"/>
    </location>
</feature>
<feature type="sequence variant" description="In SK635, temperature-sensitive." evidence="12">
    <original>L</original>
    <variation>F</variation>
    <location>
        <position position="139"/>
    </location>
</feature>
<feature type="mutagenesis site" description="No effect." evidence="7">
    <original>H</original>
    <variation>Q</variation>
    <location>
        <position position="7"/>
    </location>
</feature>
<feature type="mutagenesis site" description="No effect." evidence="7">
    <original>H</original>
    <variation>Q</variation>
    <location>
        <position position="24"/>
    </location>
</feature>
<feature type="mutagenesis site" description="Loss of activity." evidence="3">
    <original>Y</original>
    <variation>A</variation>
    <location>
        <position position="26"/>
    </location>
</feature>
<feature type="mutagenesis site" description="No effect." evidence="7">
    <original>Y</original>
    <variation>F</variation>
    <location>
        <position position="26"/>
    </location>
</feature>
<feature type="mutagenesis site" description="No effect." evidence="7">
    <original>Y</original>
    <variation>F</variation>
    <location>
        <position position="62"/>
    </location>
</feature>
<feature type="mutagenesis site" description="No effect." evidence="7">
    <original>Y</original>
    <variation>F</variation>
    <location>
        <position position="76"/>
    </location>
</feature>
<feature type="mutagenesis site" description="No effect." evidence="3">
    <original>G</original>
    <variation>A</variation>
    <location>
        <position position="98"/>
    </location>
</feature>
<feature type="mutagenesis site" description="Loss of activity." evidence="7">
    <original>H</original>
    <variation>N</variation>
    <location>
        <position position="103"/>
    </location>
</feature>
<feature type="mutagenesis site" description="Loss of activity (PubMed:9139912). No effect (PubMed:22287519)." evidence="3 7">
    <original>H</original>
    <variation>Q</variation>
    <location>
        <position position="103"/>
    </location>
</feature>
<feature type="mutagenesis site" description="No effect." evidence="3">
    <original>G</original>
    <variation>A</variation>
    <location>
        <position position="104"/>
    </location>
</feature>
<feature type="mutagenesis site" description="No effect." evidence="3">
    <original>D</original>
    <variation>A</variation>
    <location>
        <position position="129"/>
    </location>
</feature>
<feature type="mutagenesis site" description="Decrease in activity. No effect on affinity for lipids." evidence="3 4">
    <original>R</original>
    <variation>A</variation>
    <location>
        <position position="143"/>
    </location>
</feature>
<feature type="mutagenesis site" description="Loss of activity." evidence="3">
    <original>N</original>
    <variation>A</variation>
    <location>
        <position position="146"/>
    </location>
</feature>
<feature type="mutagenesis site" description="Decrease in activity." evidence="3">
    <original>E</original>
    <variation>A</variation>
    <location>
        <position position="151"/>
    </location>
</feature>
<feature type="mutagenesis site" description="Loss of activity." evidence="3">
    <original>G</original>
    <variation>A</variation>
    <location>
        <position position="154"/>
    </location>
</feature>
<feature type="mutagenesis site" description="No effect." evidence="7">
    <original>Y</original>
    <variation>F</variation>
    <location>
        <position position="190"/>
    </location>
</feature>
<feature type="mutagenesis site" description="No effect." evidence="7">
    <original>H</original>
    <variation>N</variation>
    <variation>L</variation>
    <location>
        <position position="196"/>
    </location>
</feature>
<feature type="mutagenesis site" description="50% decrease in activity." evidence="7">
    <original>H</original>
    <variation>Q</variation>
    <variation>R</variation>
    <location>
        <position position="196"/>
    </location>
</feature>
<feature type="mutagenesis site" description="No effect." evidence="7">
    <original>Y</original>
    <variation>F</variation>
    <location>
        <position position="201"/>
    </location>
</feature>
<feature type="mutagenesis site" description="Loss of activity." evidence="7">
    <original>Y</original>
    <variation>F</variation>
    <variation>T</variation>
    <location>
        <position position="235"/>
    </location>
</feature>
<feature type="mutagenesis site" description="37% decrease in activity." evidence="7">
    <original>Y</original>
    <variation>S</variation>
    <location>
        <position position="235"/>
    </location>
</feature>
<feature type="mutagenesis site" description="Decrease in activity." evidence="3">
    <original>R</original>
    <variation>A</variation>
    <location>
        <position position="239"/>
    </location>
</feature>
<feature type="mutagenesis site" description="Decrease in activity." evidence="3">
    <original>E</original>
    <variation>A</variation>
    <location>
        <position position="243"/>
    </location>
</feature>
<feature type="mutagenesis site" description="No effect." evidence="7">
    <original>Y</original>
    <variation>F</variation>
    <location>
        <position position="282"/>
    </location>
</feature>
<feature type="mutagenesis site" description="No effect." evidence="7">
    <original>H</original>
    <variation>Q</variation>
    <location>
        <position position="289"/>
    </location>
</feature>
<feature type="strand" evidence="18">
    <location>
        <begin position="5"/>
        <end position="7"/>
    </location>
</feature>
<feature type="strand" evidence="18">
    <location>
        <begin position="13"/>
        <end position="18"/>
    </location>
</feature>
<feature type="strand" evidence="18">
    <location>
        <begin position="21"/>
        <end position="24"/>
    </location>
</feature>
<feature type="helix" evidence="18">
    <location>
        <begin position="25"/>
        <end position="45"/>
    </location>
</feature>
<feature type="helix" evidence="18">
    <location>
        <begin position="54"/>
        <end position="80"/>
    </location>
</feature>
<feature type="helix" evidence="18">
    <location>
        <begin position="82"/>
        <end position="87"/>
    </location>
</feature>
<feature type="helix" evidence="18">
    <location>
        <begin position="89"/>
        <end position="93"/>
    </location>
</feature>
<feature type="helix" evidence="18">
    <location>
        <begin position="95"/>
        <end position="97"/>
    </location>
</feature>
<feature type="helix" evidence="18">
    <location>
        <begin position="102"/>
        <end position="119"/>
    </location>
</feature>
<feature type="helix" evidence="18">
    <location>
        <begin position="124"/>
        <end position="131"/>
    </location>
</feature>
<feature type="helix" evidence="18">
    <location>
        <begin position="132"/>
        <end position="134"/>
    </location>
</feature>
<feature type="helix" evidence="18">
    <location>
        <begin position="135"/>
        <end position="148"/>
    </location>
</feature>
<feature type="helix" evidence="18">
    <location>
        <begin position="167"/>
        <end position="169"/>
    </location>
</feature>
<feature type="helix" evidence="18">
    <location>
        <begin position="170"/>
        <end position="177"/>
    </location>
</feature>
<feature type="helix" evidence="18">
    <location>
        <begin position="181"/>
        <end position="183"/>
    </location>
</feature>
<feature type="helix" evidence="18">
    <location>
        <begin position="184"/>
        <end position="190"/>
    </location>
</feature>
<feature type="helix" evidence="18">
    <location>
        <begin position="198"/>
        <end position="206"/>
    </location>
</feature>
<feature type="helix" evidence="18">
    <location>
        <begin position="208"/>
        <end position="217"/>
    </location>
</feature>
<feature type="helix" evidence="18">
    <location>
        <begin position="226"/>
        <end position="243"/>
    </location>
</feature>
<feature type="helix" evidence="18">
    <location>
        <begin position="255"/>
        <end position="284"/>
    </location>
</feature>
<comment type="function">
    <text evidence="1 4 5 6">Catalyzes the transfer of the diacylglyceryl group from phosphatidylglycerol to the sulfhydryl group of the N-terminal cysteine of a prolipoprotein, the first step in the formation of mature lipoproteins.</text>
</comment>
<comment type="catalytic activity">
    <reaction evidence="1 4 5 6">
        <text>L-cysteinyl-[prolipoprotein] + a 1,2-diacyl-sn-glycero-3-phospho-(1'-sn-glycerol) = an S-1,2-diacyl-sn-glyceryl-L-cysteinyl-[prolipoprotein] + sn-glycerol 1-phosphate + H(+)</text>
        <dbReference type="Rhea" id="RHEA:56712"/>
        <dbReference type="Rhea" id="RHEA-COMP:14679"/>
        <dbReference type="Rhea" id="RHEA-COMP:14680"/>
        <dbReference type="ChEBI" id="CHEBI:15378"/>
        <dbReference type="ChEBI" id="CHEBI:29950"/>
        <dbReference type="ChEBI" id="CHEBI:57685"/>
        <dbReference type="ChEBI" id="CHEBI:64716"/>
        <dbReference type="ChEBI" id="CHEBI:140658"/>
        <dbReference type="EC" id="2.5.1.145"/>
    </reaction>
</comment>
<comment type="activity regulation">
    <text evidence="4">Inhibited by palmitate.</text>
</comment>
<comment type="pathway">
    <text evidence="1 4 5 6">Protein modification; lipoprotein biosynthesis (diacylglyceryl transfer).</text>
</comment>
<comment type="subcellular location">
    <subcellularLocation>
        <location evidence="1 2 3 4">Cell inner membrane</location>
        <topology evidence="1 3 4">Multi-pass membrane protein</topology>
    </subcellularLocation>
</comment>
<comment type="domain">
    <text evidence="4">Contains several lipid molecules that are bound within the central cavity of the protein.</text>
</comment>
<comment type="disruption phenotype">
    <text evidence="3 5">Mutants are defective in diacylglyceryl modification of prolipoprotein.</text>
</comment>
<comment type="similarity">
    <text evidence="1 9">Belongs to the Lgt family.</text>
</comment>
<protein>
    <recommendedName>
        <fullName evidence="1 8">Phosphatidylglycerol--prolipoprotein diacylglyceryl transferase</fullName>
        <ecNumber evidence="1 4 5 6">2.5.1.145</ecNumber>
    </recommendedName>
    <alternativeName>
        <fullName evidence="9">Prolipoprotein diacylglyceryl transferase</fullName>
    </alternativeName>
</protein>
<accession>P60955</accession>
<accession>P37149</accession>
<accession>Q2MA09</accession>
<name>LGT_ECOLI</name>
<evidence type="ECO:0000255" key="1">
    <source>
        <dbReference type="HAMAP-Rule" id="MF_01147"/>
    </source>
</evidence>
<evidence type="ECO:0000269" key="2">
    <source>
    </source>
</evidence>
<evidence type="ECO:0000269" key="3">
    <source>
    </source>
</evidence>
<evidence type="ECO:0000269" key="4">
    <source>
    </source>
</evidence>
<evidence type="ECO:0000269" key="5">
    <source>
    </source>
</evidence>
<evidence type="ECO:0000269" key="6">
    <source>
    </source>
</evidence>
<evidence type="ECO:0000269" key="7">
    <source>
    </source>
</evidence>
<evidence type="ECO:0000303" key="8">
    <source>
    </source>
</evidence>
<evidence type="ECO:0000305" key="9"/>
<evidence type="ECO:0000305" key="10">
    <source>
    </source>
</evidence>
<evidence type="ECO:0000305" key="11">
    <source>
    </source>
</evidence>
<evidence type="ECO:0000305" key="12">
    <source>
    </source>
</evidence>
<evidence type="ECO:0000312" key="13">
    <source>
        <dbReference type="EMBL" id="AAC75867.1"/>
    </source>
</evidence>
<evidence type="ECO:0000312" key="14">
    <source>
        <dbReference type="EMBL" id="BAE76897.1"/>
    </source>
</evidence>
<evidence type="ECO:0000312" key="15">
    <source>
        <dbReference type="PDB" id="5AZB"/>
    </source>
</evidence>
<evidence type="ECO:0007744" key="16">
    <source>
        <dbReference type="PDB" id="5AZB"/>
    </source>
</evidence>
<evidence type="ECO:0007744" key="17">
    <source>
        <dbReference type="PDB" id="5AZC"/>
    </source>
</evidence>
<evidence type="ECO:0007829" key="18">
    <source>
        <dbReference type="PDB" id="5AZB"/>
    </source>
</evidence>
<reference key="1">
    <citation type="journal article" date="1995" name="J. Bacteriol.">
        <title>The umpA gene of Escherichia coli encodes phosphatidylglycerol:prolipoprotein diacylglyceryl transferase (lgt) and regulates thymidylate synthase levels through translational coupling.</title>
        <authorList>
            <person name="Gan K."/>
            <person name="Sankaran K."/>
            <person name="Williams M.G."/>
            <person name="Aldea M."/>
            <person name="Rudd K.E."/>
            <person name="Kushner S.R."/>
            <person name="Wu H.C."/>
        </authorList>
    </citation>
    <scope>NUCLEOTIDE SEQUENCE [GENOMIC DNA]</scope>
    <scope>FUNCTION</scope>
    <scope>CATALYTIC ACTIVITY</scope>
    <scope>PATHWAY</scope>
    <scope>DISRUPTION PHENOTYPE</scope>
</reference>
<reference key="2">
    <citation type="journal article" date="1997" name="Science">
        <title>The complete genome sequence of Escherichia coli K-12.</title>
        <authorList>
            <person name="Blattner F.R."/>
            <person name="Plunkett G. III"/>
            <person name="Bloch C.A."/>
            <person name="Perna N.T."/>
            <person name="Burland V."/>
            <person name="Riley M."/>
            <person name="Collado-Vides J."/>
            <person name="Glasner J.D."/>
            <person name="Rode C.K."/>
            <person name="Mayhew G.F."/>
            <person name="Gregor J."/>
            <person name="Davis N.W."/>
            <person name="Kirkpatrick H.A."/>
            <person name="Goeden M.A."/>
            <person name="Rose D.J."/>
            <person name="Mau B."/>
            <person name="Shao Y."/>
        </authorList>
    </citation>
    <scope>NUCLEOTIDE SEQUENCE [LARGE SCALE GENOMIC DNA]</scope>
    <source>
        <strain>K12 / MG1655 / ATCC 47076</strain>
    </source>
</reference>
<reference key="3">
    <citation type="journal article" date="2006" name="Mol. Syst. Biol.">
        <title>Highly accurate genome sequences of Escherichia coli K-12 strains MG1655 and W3110.</title>
        <authorList>
            <person name="Hayashi K."/>
            <person name="Morooka N."/>
            <person name="Yamamoto Y."/>
            <person name="Fujita K."/>
            <person name="Isono K."/>
            <person name="Choi S."/>
            <person name="Ohtsubo E."/>
            <person name="Baba T."/>
            <person name="Wanner B.L."/>
            <person name="Mori H."/>
            <person name="Horiuchi T."/>
        </authorList>
    </citation>
    <scope>NUCLEOTIDE SEQUENCE [LARGE SCALE GENOMIC DNA]</scope>
    <source>
        <strain>K12 / W3110 / ATCC 27325 / DSM 5911</strain>
    </source>
</reference>
<reference key="4">
    <citation type="journal article" date="1983" name="Proc. Natl. Acad. Sci. U.S.A.">
        <title>Primary structure of the Escherichia coli thyA gene and its thymidylate synthase product.</title>
        <authorList>
            <person name="Belfort M."/>
            <person name="Maley G.F."/>
            <person name="Pedersen-Lane J."/>
            <person name="Maley F."/>
        </authorList>
    </citation>
    <scope>NUCLEOTIDE SEQUENCE [GENOMIC DNA] OF 226-291</scope>
    <source>
        <strain>K12 / JM103 / ATCC 39403 / DSM 2829 / KCTC 1112 / NCIMB 12044</strain>
    </source>
</reference>
<reference key="5">
    <citation type="journal article" date="1994" name="J. Biol. Chem.">
        <title>Lipid modification of bacterial prolipoprotein. Transfer of diacylglyceryl moiety from phosphatidylglycerol.</title>
        <authorList>
            <person name="Sankaran K."/>
            <person name="Wu H.C."/>
        </authorList>
    </citation>
    <scope>FUNCTION</scope>
    <scope>CATALYTIC ACTIVITY</scope>
    <scope>PATHWAY</scope>
</reference>
<reference key="6">
    <citation type="journal article" date="1995" name="J. Bacteriol.">
        <title>Structure-function relationship of bacterial prolipoprotein diacylglyceryl transferase: functionally significant conserved regions.</title>
        <authorList>
            <person name="Qi H.Y."/>
            <person name="Sankaran K."/>
            <person name="Gan K."/>
            <person name="Wu H.C."/>
        </authorList>
    </citation>
    <scope>VARIANTS SK634; SK635 AND SK636</scope>
</reference>
<reference key="7">
    <citation type="journal article" date="1997" name="J. Bacteriol.">
        <title>Roles of histidine-103 and tyrosine-235 in the function of the prolipoprotein diacylglyceryl transferase of Escherichia coli.</title>
        <authorList>
            <person name="Sankaran K."/>
            <person name="Gan K."/>
            <person name="Rash B."/>
            <person name="Qi H.-Y."/>
            <person name="Wu H.C."/>
            <person name="Rick P.D."/>
        </authorList>
    </citation>
    <scope>MUTAGENESIS OF HIS-7; HIS-24; TYR-26; TYR-62; TYR-76; HIS-103; TYR-190; HIS-196; TYR-201; TYR-235; TYR-282 AND HIS-289</scope>
</reference>
<reference key="8">
    <citation type="journal article" date="2005" name="Science">
        <title>Global topology analysis of the Escherichia coli inner membrane proteome.</title>
        <authorList>
            <person name="Daley D.O."/>
            <person name="Rapp M."/>
            <person name="Granseth E."/>
            <person name="Melen K."/>
            <person name="Drew D."/>
            <person name="von Heijne G."/>
        </authorList>
    </citation>
    <scope>TOPOLOGY [LARGE SCALE ANALYSIS]</scope>
    <scope>SUBCELLULAR LOCATION</scope>
    <source>
        <strain>K12 / MG1655 / ATCC 47076</strain>
    </source>
</reference>
<reference key="9">
    <citation type="journal article" date="2012" name="J. Bacteriol.">
        <title>Phosphatidylglycerol::prolipoprotein diacylglyceryl transferase (Lgt) of Escherichia coli has seven transmembrane segments, and its essential residues are embedded in the membrane.</title>
        <authorList>
            <person name="Pailler J."/>
            <person name="Aucher W."/>
            <person name="Pires M."/>
            <person name="Buddelmeijer N."/>
        </authorList>
    </citation>
    <scope>SUBCELLULAR LOCATION</scope>
    <scope>TOPOLOGY</scope>
    <scope>DISRUPTION PHENOTYPE</scope>
    <scope>MUTAGENESIS OF TYR-26; GLY-98; HIS-103; GLY-104; ASP-129; ARG-143; ASN-146; GLU-151; GLY-154; ARG-239 AND GLU-243</scope>
</reference>
<reference evidence="16 17" key="10">
    <citation type="journal article" date="2016" name="Nat. Commun.">
        <title>Crystal structure of E. coli lipoprotein diacylglyceryl transferase.</title>
        <authorList>
            <person name="Mao G."/>
            <person name="Zhao Y."/>
            <person name="Kang X."/>
            <person name="Li Z."/>
            <person name="Zhang Y."/>
            <person name="Wang X."/>
            <person name="Sun F."/>
            <person name="Sankaran K."/>
            <person name="Zhang X.C."/>
        </authorList>
    </citation>
    <scope>X-RAY CRYSTALLOGRAPHY (1.60 ANGSTROMS) IN COMPLEXES WITH PHOSPHATIDYLGLYCEROL AND PALMITATE</scope>
    <scope>FUNCTION</scope>
    <scope>CATALYTIC ACTIVITY</scope>
    <scope>ACTIVITY REGULATION</scope>
    <scope>PATHWAY</scope>
    <scope>SUBCELLULAR LOCATION</scope>
    <scope>TOPOLOGY</scope>
    <scope>DOMAIN</scope>
    <scope>MUTAGENESIS OF ARG-143</scope>
</reference>
<keyword id="KW-0002">3D-structure</keyword>
<keyword id="KW-0997">Cell inner membrane</keyword>
<keyword id="KW-1003">Cell membrane</keyword>
<keyword id="KW-0472">Membrane</keyword>
<keyword id="KW-1185">Reference proteome</keyword>
<keyword id="KW-0808">Transferase</keyword>
<keyword id="KW-0812">Transmembrane</keyword>
<keyword id="KW-1133">Transmembrane helix</keyword>
<proteinExistence type="evidence at protein level"/>
<gene>
    <name evidence="1 8" type="primary">lgt</name>
    <name evidence="8" type="synonym">umpA</name>
    <name evidence="13" type="ordered locus">b2828</name>
    <name evidence="14" type="ordered locus">JW2796</name>
</gene>
<dbReference type="EC" id="2.5.1.145" evidence="1 4 5 6"/>
<dbReference type="EMBL" id="U12289">
    <property type="protein sequence ID" value="AAA69024.1"/>
    <property type="molecule type" value="Genomic_DNA"/>
</dbReference>
<dbReference type="EMBL" id="U29581">
    <property type="protein sequence ID" value="AAB40475.1"/>
    <property type="molecule type" value="Genomic_DNA"/>
</dbReference>
<dbReference type="EMBL" id="U00096">
    <property type="protein sequence ID" value="AAC75867.1"/>
    <property type="molecule type" value="Genomic_DNA"/>
</dbReference>
<dbReference type="EMBL" id="AP009048">
    <property type="protein sequence ID" value="BAE76897.1"/>
    <property type="molecule type" value="Genomic_DNA"/>
</dbReference>
<dbReference type="EMBL" id="J01710">
    <property type="status" value="NOT_ANNOTATED_CDS"/>
    <property type="molecule type" value="Genomic_DNA"/>
</dbReference>
<dbReference type="PIR" id="A56149">
    <property type="entry name" value="A56149"/>
</dbReference>
<dbReference type="RefSeq" id="NP_417305.1">
    <property type="nucleotide sequence ID" value="NC_000913.3"/>
</dbReference>
<dbReference type="RefSeq" id="WP_000204658.1">
    <property type="nucleotide sequence ID" value="NZ_STEB01000034.1"/>
</dbReference>
<dbReference type="PDB" id="5AZB">
    <property type="method" value="X-ray"/>
    <property type="resolution" value="1.60 A"/>
    <property type="chains" value="A=2-291"/>
</dbReference>
<dbReference type="PDB" id="5AZC">
    <property type="method" value="X-ray"/>
    <property type="resolution" value="1.90 A"/>
    <property type="chains" value="A=2-291"/>
</dbReference>
<dbReference type="PDBsum" id="5AZB"/>
<dbReference type="PDBsum" id="5AZC"/>
<dbReference type="SMR" id="P60955"/>
<dbReference type="BioGRID" id="4263276">
    <property type="interactions" value="176"/>
</dbReference>
<dbReference type="FunCoup" id="P60955">
    <property type="interactions" value="467"/>
</dbReference>
<dbReference type="STRING" id="511145.b2828"/>
<dbReference type="ChEMBL" id="CHEMBL3309026"/>
<dbReference type="jPOST" id="P60955"/>
<dbReference type="PaxDb" id="511145-b2828"/>
<dbReference type="EnsemblBacteria" id="AAC75867">
    <property type="protein sequence ID" value="AAC75867"/>
    <property type="gene ID" value="b2828"/>
</dbReference>
<dbReference type="GeneID" id="93779170"/>
<dbReference type="GeneID" id="947303"/>
<dbReference type="KEGG" id="ecj:JW2796"/>
<dbReference type="KEGG" id="eco:b2828"/>
<dbReference type="KEGG" id="ecoc:C3026_15525"/>
<dbReference type="PATRIC" id="fig|1411691.4.peg.3907"/>
<dbReference type="EchoBASE" id="EB2049"/>
<dbReference type="eggNOG" id="COG0682">
    <property type="taxonomic scope" value="Bacteria"/>
</dbReference>
<dbReference type="HOGENOM" id="CLU_013386_1_0_6"/>
<dbReference type="InParanoid" id="P60955"/>
<dbReference type="OMA" id="SIRWYGL"/>
<dbReference type="OrthoDB" id="871140at2"/>
<dbReference type="PhylomeDB" id="P60955"/>
<dbReference type="BioCyc" id="EcoCyc:EG12128-MONOMER"/>
<dbReference type="BioCyc" id="MetaCyc:EG12128-MONOMER"/>
<dbReference type="BRENDA" id="2.5.1.145">
    <property type="organism ID" value="2026"/>
</dbReference>
<dbReference type="UniPathway" id="UPA00664"/>
<dbReference type="EvolutionaryTrace" id="P60955"/>
<dbReference type="PRO" id="PR:P60955"/>
<dbReference type="Proteomes" id="UP000000625">
    <property type="component" value="Chromosome"/>
</dbReference>
<dbReference type="GO" id="GO:0009898">
    <property type="term" value="C:cytoplasmic side of plasma membrane"/>
    <property type="evidence" value="ECO:0000314"/>
    <property type="project" value="EcoCyc"/>
</dbReference>
<dbReference type="GO" id="GO:0005886">
    <property type="term" value="C:plasma membrane"/>
    <property type="evidence" value="ECO:0000314"/>
    <property type="project" value="EcoCyc"/>
</dbReference>
<dbReference type="GO" id="GO:0008961">
    <property type="term" value="F:phosphatidylglycerol-prolipoprotein diacylglyceryl transferase activity"/>
    <property type="evidence" value="ECO:0000314"/>
    <property type="project" value="EcoCyc"/>
</dbReference>
<dbReference type="GO" id="GO:0042158">
    <property type="term" value="P:lipoprotein biosynthetic process"/>
    <property type="evidence" value="ECO:0000314"/>
    <property type="project" value="EcoCyc"/>
</dbReference>
<dbReference type="HAMAP" id="MF_01147">
    <property type="entry name" value="Lgt"/>
    <property type="match status" value="1"/>
</dbReference>
<dbReference type="InterPro" id="IPR001640">
    <property type="entry name" value="Lgt"/>
</dbReference>
<dbReference type="NCBIfam" id="TIGR00544">
    <property type="entry name" value="lgt"/>
    <property type="match status" value="1"/>
</dbReference>
<dbReference type="PANTHER" id="PTHR30589:SF0">
    <property type="entry name" value="PHOSPHATIDYLGLYCEROL--PROLIPOPROTEIN DIACYLGLYCERYL TRANSFERASE"/>
    <property type="match status" value="1"/>
</dbReference>
<dbReference type="PANTHER" id="PTHR30589">
    <property type="entry name" value="PROLIPOPROTEIN DIACYLGLYCERYL TRANSFERASE"/>
    <property type="match status" value="1"/>
</dbReference>
<dbReference type="Pfam" id="PF01790">
    <property type="entry name" value="LGT"/>
    <property type="match status" value="1"/>
</dbReference>
<dbReference type="PROSITE" id="PS01311">
    <property type="entry name" value="LGT"/>
    <property type="match status" value="1"/>
</dbReference>
<organism>
    <name type="scientific">Escherichia coli (strain K12)</name>
    <dbReference type="NCBI Taxonomy" id="83333"/>
    <lineage>
        <taxon>Bacteria</taxon>
        <taxon>Pseudomonadati</taxon>
        <taxon>Pseudomonadota</taxon>
        <taxon>Gammaproteobacteria</taxon>
        <taxon>Enterobacterales</taxon>
        <taxon>Enterobacteriaceae</taxon>
        <taxon>Escherichia</taxon>
    </lineage>
</organism>
<sequence>MTSSYLHFPEFDPVIFSIGPVALHWYGLMYLVGFIFAMWLATRRANRPGSGWTKNEVENLLYAGFLGVFLGGRIGYVLFYNFPQFMADPLYLFRVWDGGMSFHGGLIGVIVVMIIFARRTKRSFFQVSDFIAPLIPFGLGAGRLGNFINGELWGRVDPNFPFAMLFPGSRTEDILLLQTNPQWQSIFDTYGVLPRHPSQLYELLLEGVVLFIILNLYIRKPRPMGAVSGLFLIGYGAFRIIVEFFRQPDAQFTGAWVQYISMGQILSIPMIVAGVIMMVWAYRRSPQQHVS</sequence>